<proteinExistence type="evidence at transcript level"/>
<organismHost>
    <name type="scientific">Lactococcus lactis</name>
    <dbReference type="NCBI Taxonomy" id="1358"/>
</organismHost>
<sequence>MNYGTNKHYANEYGMELNEYFKHHFSYEELAGWYTMQVLKYLVRAGKKEGESYDKDRNKALDYAGELANLSNENELTEYTTDDIMGFAQDIADDFKQWKGERNNFKSEFTKEEIKAIDERYLEFIEEV</sequence>
<accession>B6UL32</accession>
<organism>
    <name type="scientific">Lactococcus phage p2</name>
    <name type="common">Lactococcus lactis bacteriophage p2</name>
    <dbReference type="NCBI Taxonomy" id="254252"/>
    <lineage>
        <taxon>Viruses</taxon>
        <taxon>Duplodnaviria</taxon>
        <taxon>Heunggongvirae</taxon>
        <taxon>Uroviricota</taxon>
        <taxon>Caudoviricetes</taxon>
        <taxon>Skunavirus</taxon>
    </lineage>
</organism>
<feature type="chain" id="PRO_0000438233" description="SaV protein">
    <location>
        <begin position="1"/>
        <end position="128"/>
    </location>
</feature>
<evidence type="ECO:0000269" key="1">
    <source>
    </source>
</evidence>
<evidence type="ECO:0000305" key="2"/>
<evidence type="ECO:0000312" key="3">
    <source>
        <dbReference type="EMBL" id="ACI94899.1"/>
    </source>
</evidence>
<protein>
    <recommendedName>
        <fullName evidence="3">SaV protein</fullName>
    </recommendedName>
    <alternativeName>
        <fullName evidence="2">Gene product 26</fullName>
        <shortName evidence="2">Gp26</shortName>
    </alternativeName>
</protein>
<keyword id="KW-0244">Early protein</keyword>
<dbReference type="EMBL" id="GQ979703">
    <property type="protein sequence ID" value="ACI94899.1"/>
    <property type="molecule type" value="Genomic_DNA"/>
</dbReference>
<dbReference type="RefSeq" id="YP_009613506.1">
    <property type="nucleotide sequence ID" value="NC_042024.1"/>
</dbReference>
<dbReference type="SMR" id="B6UL32"/>
<dbReference type="GeneID" id="40089881"/>
<dbReference type="Proteomes" id="UP000002348">
    <property type="component" value="Segment"/>
</dbReference>
<dbReference type="InterPro" id="IPR021739">
    <property type="entry name" value="SaV-like"/>
</dbReference>
<dbReference type="Pfam" id="PF11753">
    <property type="entry name" value="DUF3310"/>
    <property type="match status" value="1"/>
</dbReference>
<comment type="function">
    <text evidence="1">Involved in the sensitivity of the virus to the host AbiV system.</text>
</comment>
<comment type="induction">
    <text evidence="1">Expressed in the early phase of the viral replicative cycle.</text>
</comment>
<comment type="similarity">
    <text evidence="2">Belongs to the skunalikevirus SaV protein family.</text>
</comment>
<name>SAV_BPLP2</name>
<reference key="1">
    <citation type="submission" date="2010-02" db="EMBL/GenBank/DDBJ databases">
        <title>Complete genomic sequence of Lactococcus lactis phage p2.</title>
        <authorList>
            <person name="Tremblay D.M."/>
            <person name="Deveau H."/>
            <person name="Moineau S."/>
        </authorList>
    </citation>
    <scope>NUCLEOTIDE SEQUENCE [LARGE SCALE GENOMIC DNA]</scope>
</reference>
<reference key="2">
    <citation type="journal article" date="2009" name="Appl. Environ. Microbiol.">
        <title>Identification and characterization of the phage gene sav, involved in sensitivity to the lactococcal abortive infection mechanism AbiV.</title>
        <authorList>
            <person name="Haaber J."/>
            <person name="Rousseau G.M."/>
            <person name="Hammer K."/>
            <person name="Moineau S."/>
        </authorList>
    </citation>
    <scope>NUCLEOTIDE SEQUENCE [LARGE SCALE GENOMIC DNA]</scope>
    <scope>FUNCTION</scope>
    <scope>INDUCTION</scope>
</reference>